<gene>
    <name type="primary">MEP2</name>
    <name type="ORF">TRV_01237</name>
</gene>
<feature type="signal peptide" evidence="2">
    <location>
        <begin position="1"/>
        <end position="19"/>
    </location>
</feature>
<feature type="propeptide" id="PRO_0000397728" evidence="1">
    <location>
        <begin position="20"/>
        <end position="244"/>
    </location>
</feature>
<feature type="chain" id="PRO_0000397729" description="Probable extracellular metalloproteinase 2">
    <location>
        <begin position="245"/>
        <end position="632"/>
    </location>
</feature>
<feature type="active site" evidence="3">
    <location>
        <position position="430"/>
    </location>
</feature>
<feature type="binding site" evidence="3">
    <location>
        <position position="429"/>
    </location>
    <ligand>
        <name>Zn(2+)</name>
        <dbReference type="ChEBI" id="CHEBI:29105"/>
        <note>catalytic</note>
    </ligand>
</feature>
<feature type="binding site" evidence="3">
    <location>
        <position position="433"/>
    </location>
    <ligand>
        <name>Zn(2+)</name>
        <dbReference type="ChEBI" id="CHEBI:29105"/>
        <note>catalytic</note>
    </ligand>
</feature>
<feature type="glycosylation site" description="N-linked (GlcNAc...) asparagine" evidence="2">
    <location>
        <position position="81"/>
    </location>
</feature>
<feature type="glycosylation site" description="N-linked (GlcNAc...) asparagine" evidence="2">
    <location>
        <position position="270"/>
    </location>
</feature>
<dbReference type="EC" id="3.4.24.-"/>
<dbReference type="EMBL" id="ACYE01000067">
    <property type="protein sequence ID" value="EFE43987.1"/>
    <property type="molecule type" value="Genomic_DNA"/>
</dbReference>
<dbReference type="RefSeq" id="XP_003024598.1">
    <property type="nucleotide sequence ID" value="XM_003024552.1"/>
</dbReference>
<dbReference type="SMR" id="D4D2D2"/>
<dbReference type="MEROPS" id="M36.001"/>
<dbReference type="GlyCosmos" id="D4D2D2">
    <property type="glycosylation" value="2 sites, No reported glycans"/>
</dbReference>
<dbReference type="GeneID" id="9579926"/>
<dbReference type="KEGG" id="tve:TRV_01237"/>
<dbReference type="HOGENOM" id="CLU_012703_3_0_1"/>
<dbReference type="OrthoDB" id="953at34384"/>
<dbReference type="Proteomes" id="UP000008383">
    <property type="component" value="Unassembled WGS sequence"/>
</dbReference>
<dbReference type="GO" id="GO:0005576">
    <property type="term" value="C:extracellular region"/>
    <property type="evidence" value="ECO:0007669"/>
    <property type="project" value="UniProtKB-SubCell"/>
</dbReference>
<dbReference type="GO" id="GO:0004222">
    <property type="term" value="F:metalloendopeptidase activity"/>
    <property type="evidence" value="ECO:0007669"/>
    <property type="project" value="InterPro"/>
</dbReference>
<dbReference type="GO" id="GO:0008270">
    <property type="term" value="F:zinc ion binding"/>
    <property type="evidence" value="ECO:0007669"/>
    <property type="project" value="InterPro"/>
</dbReference>
<dbReference type="GO" id="GO:0006508">
    <property type="term" value="P:proteolysis"/>
    <property type="evidence" value="ECO:0007669"/>
    <property type="project" value="UniProtKB-KW"/>
</dbReference>
<dbReference type="CDD" id="cd09596">
    <property type="entry name" value="M36"/>
    <property type="match status" value="1"/>
</dbReference>
<dbReference type="Gene3D" id="3.10.170.10">
    <property type="match status" value="1"/>
</dbReference>
<dbReference type="Gene3D" id="1.10.390.10">
    <property type="entry name" value="Neutral Protease Domain 2"/>
    <property type="match status" value="1"/>
</dbReference>
<dbReference type="InterPro" id="IPR011096">
    <property type="entry name" value="FTP_domain"/>
</dbReference>
<dbReference type="InterPro" id="IPR050371">
    <property type="entry name" value="Fungal_virulence_M36"/>
</dbReference>
<dbReference type="InterPro" id="IPR001842">
    <property type="entry name" value="Peptidase_M36"/>
</dbReference>
<dbReference type="InterPro" id="IPR027268">
    <property type="entry name" value="Peptidase_M4/M1_CTD_sf"/>
</dbReference>
<dbReference type="PANTHER" id="PTHR33478">
    <property type="entry name" value="EXTRACELLULAR METALLOPROTEINASE MEP"/>
    <property type="match status" value="1"/>
</dbReference>
<dbReference type="PANTHER" id="PTHR33478:SF1">
    <property type="entry name" value="EXTRACELLULAR METALLOPROTEINASE MEP"/>
    <property type="match status" value="1"/>
</dbReference>
<dbReference type="Pfam" id="PF07504">
    <property type="entry name" value="FTP"/>
    <property type="match status" value="1"/>
</dbReference>
<dbReference type="Pfam" id="PF02128">
    <property type="entry name" value="Peptidase_M36"/>
    <property type="match status" value="1"/>
</dbReference>
<dbReference type="PRINTS" id="PR00999">
    <property type="entry name" value="FUNGALYSIN"/>
</dbReference>
<dbReference type="SUPFAM" id="SSF55486">
    <property type="entry name" value="Metalloproteases ('zincins'), catalytic domain"/>
    <property type="match status" value="1"/>
</dbReference>
<dbReference type="PROSITE" id="PS00142">
    <property type="entry name" value="ZINC_PROTEASE"/>
    <property type="match status" value="1"/>
</dbReference>
<sequence>MHGLLLAGLAAALPLGVAGLPARQQSGLSPRGIDINPYRFASMAKYSEHKATSQMVHSFSYSKDDDYVATATKLVKSTFPNMTFRTVKDHYIGTNGIGHVHFKQTAHGIDIDNADFNVNIGRDGKVFTFGNSFYEGEMPKTNPLTKRDFSDPVKALHGAIKTLKLPVKPQSAKAMPMKEAETFKFEGTSGALSDPMAKLVYIQKDGKLHLTWRVETDVGDNWLLSYVDSKETETVHNVVDYVASADYKVFAWGLNDPTEGQPTMIKDPWNTTGTGSPFTWHGDGQMDYTVTRGNNIAAQDNPSGGEQWENNYRPDSPELSFVYEYNEQMEPEQYKDFAITQLFYTTNTFHDVLYSLGFTEEAGNFQMNNNGKGGEGNDFAICNAQDGSGTNNANFATPPDGQNGRMRMYTWTTAQPSRDGDLEAGIVIHEYTHGLSNRLCGGPANSNCLTELEAGGMGEGWGDFYATAIRLKQDDTHDTDYTMGEWAANMQGGIREYPYSTNMQTNPYTYADVQGMDEVHGIGTVWATILYEVLWNLIDEHGMSKNIMPKFVNGAPSDGRNLAMKLVLDGMTLMPCNPNFMQARDAIIDADQALTNGQNKCALMKAFSKRGLGANYKHGKTRVNNFDMPADC</sequence>
<accession>D4D2D2</accession>
<name>MEP2_TRIVH</name>
<proteinExistence type="inferred from homology"/>
<reference key="1">
    <citation type="journal article" date="2011" name="Genome Biol.">
        <title>Comparative and functional genomics provide insights into the pathogenicity of dermatophytic fungi.</title>
        <authorList>
            <person name="Burmester A."/>
            <person name="Shelest E."/>
            <person name="Gloeckner G."/>
            <person name="Heddergott C."/>
            <person name="Schindler S."/>
            <person name="Staib P."/>
            <person name="Heidel A."/>
            <person name="Felder M."/>
            <person name="Petzold A."/>
            <person name="Szafranski K."/>
            <person name="Feuermann M."/>
            <person name="Pedruzzi I."/>
            <person name="Priebe S."/>
            <person name="Groth M."/>
            <person name="Winkler R."/>
            <person name="Li W."/>
            <person name="Kniemeyer O."/>
            <person name="Schroeckh V."/>
            <person name="Hertweck C."/>
            <person name="Hube B."/>
            <person name="White T.C."/>
            <person name="Platzer M."/>
            <person name="Guthke R."/>
            <person name="Heitman J."/>
            <person name="Woestemeyer J."/>
            <person name="Zipfel P.F."/>
            <person name="Monod M."/>
            <person name="Brakhage A.A."/>
        </authorList>
    </citation>
    <scope>NUCLEOTIDE SEQUENCE [LARGE SCALE GENOMIC DNA]</scope>
    <source>
        <strain>HKI 0517</strain>
    </source>
</reference>
<comment type="function">
    <text evidence="1">Secreted metalloproteinase probably acting as a virulence factor.</text>
</comment>
<comment type="cofactor">
    <cofactor evidence="1">
        <name>Zn(2+)</name>
        <dbReference type="ChEBI" id="CHEBI:29105"/>
    </cofactor>
    <text evidence="1">Binds 1 zinc ion per subunit.</text>
</comment>
<comment type="subcellular location">
    <subcellularLocation>
        <location evidence="1">Secreted</location>
    </subcellularLocation>
</comment>
<comment type="similarity">
    <text evidence="4">Belongs to the peptidase M36 family.</text>
</comment>
<evidence type="ECO:0000250" key="1"/>
<evidence type="ECO:0000255" key="2"/>
<evidence type="ECO:0000255" key="3">
    <source>
        <dbReference type="PROSITE-ProRule" id="PRU10095"/>
    </source>
</evidence>
<evidence type="ECO:0000305" key="4"/>
<organism>
    <name type="scientific">Trichophyton verrucosum (strain HKI 0517)</name>
    <dbReference type="NCBI Taxonomy" id="663202"/>
    <lineage>
        <taxon>Eukaryota</taxon>
        <taxon>Fungi</taxon>
        <taxon>Dikarya</taxon>
        <taxon>Ascomycota</taxon>
        <taxon>Pezizomycotina</taxon>
        <taxon>Eurotiomycetes</taxon>
        <taxon>Eurotiomycetidae</taxon>
        <taxon>Onygenales</taxon>
        <taxon>Arthrodermataceae</taxon>
        <taxon>Trichophyton</taxon>
    </lineage>
</organism>
<protein>
    <recommendedName>
        <fullName>Probable extracellular metalloproteinase 2</fullName>
        <ecNumber>3.4.24.-</ecNumber>
    </recommendedName>
    <alternativeName>
        <fullName>Fungalysin MEP2</fullName>
    </alternativeName>
</protein>
<keyword id="KW-0325">Glycoprotein</keyword>
<keyword id="KW-0378">Hydrolase</keyword>
<keyword id="KW-0479">Metal-binding</keyword>
<keyword id="KW-0482">Metalloprotease</keyword>
<keyword id="KW-0645">Protease</keyword>
<keyword id="KW-0964">Secreted</keyword>
<keyword id="KW-0732">Signal</keyword>
<keyword id="KW-0843">Virulence</keyword>
<keyword id="KW-0862">Zinc</keyword>
<keyword id="KW-0865">Zymogen</keyword>